<protein>
    <recommendedName>
        <fullName evidence="2">Membrane-bound acylglycerophosphatidylinositol O-acyltransferase frj</fullName>
        <ecNumber evidence="4">2.3.1.-</ecNumber>
        <ecNumber evidence="4">2.3.1.23</ecNumber>
        <ecNumber evidence="4">2.3.1.n6</ecNumber>
        <ecNumber evidence="4">2.3.1.n7</ecNumber>
    </recommendedName>
    <alternativeName>
        <fullName evidence="5">Farjavit</fullName>
        <shortName evidence="5">Frj</shortName>
    </alternativeName>
    <alternativeName>
        <fullName>Lysophospholipid acyltransferase 7</fullName>
        <shortName>LPLAT 7</shortName>
    </alternativeName>
    <alternativeName>
        <fullName>Membrane-bound acyltransferase 7</fullName>
        <shortName evidence="5">MBOA 7</shortName>
    </alternativeName>
</protein>
<name>MBOA7_DROME</name>
<organism>
    <name type="scientific">Drosophila melanogaster</name>
    <name type="common">Fruit fly</name>
    <dbReference type="NCBI Taxonomy" id="7227"/>
    <lineage>
        <taxon>Eukaryota</taxon>
        <taxon>Metazoa</taxon>
        <taxon>Ecdysozoa</taxon>
        <taxon>Arthropoda</taxon>
        <taxon>Hexapoda</taxon>
        <taxon>Insecta</taxon>
        <taxon>Pterygota</taxon>
        <taxon>Neoptera</taxon>
        <taxon>Endopterygota</taxon>
        <taxon>Diptera</taxon>
        <taxon>Brachycera</taxon>
        <taxon>Muscomorpha</taxon>
        <taxon>Ephydroidea</taxon>
        <taxon>Drosophilidae</taxon>
        <taxon>Drosophila</taxon>
        <taxon>Sophophora</taxon>
    </lineage>
</organism>
<dbReference type="EC" id="2.3.1.-" evidence="4"/>
<dbReference type="EC" id="2.3.1.23" evidence="4"/>
<dbReference type="EC" id="2.3.1.n6" evidence="4"/>
<dbReference type="EC" id="2.3.1.n7" evidence="4"/>
<dbReference type="EMBL" id="AE014134">
    <property type="protein sequence ID" value="AAF52384.1"/>
    <property type="molecule type" value="Genomic_DNA"/>
</dbReference>
<dbReference type="EMBL" id="AE014134">
    <property type="protein sequence ID" value="AAS64645.1"/>
    <property type="molecule type" value="Genomic_DNA"/>
</dbReference>
<dbReference type="EMBL" id="BT003271">
    <property type="protein sequence ID" value="AAO25028.1"/>
    <property type="molecule type" value="mRNA"/>
</dbReference>
<dbReference type="RefSeq" id="NP_609029.1">
    <property type="nucleotide sequence ID" value="NM_135185.4"/>
</dbReference>
<dbReference type="RefSeq" id="NP_995637.1">
    <property type="nucleotide sequence ID" value="NM_205915.3"/>
</dbReference>
<dbReference type="SMR" id="Q9VMD5"/>
<dbReference type="FunCoup" id="Q9VMD5">
    <property type="interactions" value="758"/>
</dbReference>
<dbReference type="IntAct" id="Q9VMD5">
    <property type="interactions" value="2"/>
</dbReference>
<dbReference type="STRING" id="7227.FBpp0078889"/>
<dbReference type="SwissLipids" id="SLP:000001064"/>
<dbReference type="PaxDb" id="7227-FBpp0078889"/>
<dbReference type="DNASU" id="33900"/>
<dbReference type="EnsemblMetazoa" id="FBtr0079258">
    <property type="protein sequence ID" value="FBpp0078888"/>
    <property type="gene ID" value="FBgn0031815"/>
</dbReference>
<dbReference type="EnsemblMetazoa" id="FBtr0079259">
    <property type="protein sequence ID" value="FBpp0078889"/>
    <property type="gene ID" value="FBgn0031815"/>
</dbReference>
<dbReference type="GeneID" id="33900"/>
<dbReference type="KEGG" id="dme:Dmel_CG9526"/>
<dbReference type="UCSC" id="CG9526-RA">
    <property type="organism name" value="d. melanogaster"/>
</dbReference>
<dbReference type="AGR" id="FB:FBgn0031815"/>
<dbReference type="CTD" id="33900"/>
<dbReference type="FlyBase" id="FBgn0031815">
    <property type="gene designation" value="frj"/>
</dbReference>
<dbReference type="VEuPathDB" id="VectorBase:FBgn0031815"/>
<dbReference type="eggNOG" id="KOG2706">
    <property type="taxonomic scope" value="Eukaryota"/>
</dbReference>
<dbReference type="GeneTree" id="ENSGT01030000234564"/>
<dbReference type="HOGENOM" id="CLU_011340_1_1_1"/>
<dbReference type="InParanoid" id="Q9VMD5"/>
<dbReference type="OMA" id="TNMIQML"/>
<dbReference type="OrthoDB" id="7663182at2759"/>
<dbReference type="PhylomeDB" id="Q9VMD5"/>
<dbReference type="Reactome" id="R-DME-1482922">
    <property type="pathway name" value="Acyl chain remodelling of PI"/>
</dbReference>
<dbReference type="UniPathway" id="UPA00085"/>
<dbReference type="BioGRID-ORCS" id="33900">
    <property type="hits" value="0 hits in 1 CRISPR screen"/>
</dbReference>
<dbReference type="GenomeRNAi" id="33900"/>
<dbReference type="PRO" id="PR:Q9VMD5"/>
<dbReference type="Proteomes" id="UP000000803">
    <property type="component" value="Chromosome 2L"/>
</dbReference>
<dbReference type="Bgee" id="FBgn0031815">
    <property type="expression patterns" value="Expressed in lamina monopolar neuron L2 (Drosophila) in insect head and 234 other cell types or tissues"/>
</dbReference>
<dbReference type="GO" id="GO:0016020">
    <property type="term" value="C:membrane"/>
    <property type="evidence" value="ECO:0000314"/>
    <property type="project" value="FlyBase"/>
</dbReference>
<dbReference type="GO" id="GO:0044233">
    <property type="term" value="C:mitochondria-associated endoplasmic reticulum membrane contact site"/>
    <property type="evidence" value="ECO:0000318"/>
    <property type="project" value="GO_Central"/>
</dbReference>
<dbReference type="GO" id="GO:0071617">
    <property type="term" value="F:lysophospholipid acyltransferase activity"/>
    <property type="evidence" value="ECO:0000314"/>
    <property type="project" value="FlyBase"/>
</dbReference>
<dbReference type="GO" id="GO:0030258">
    <property type="term" value="P:lipid modification"/>
    <property type="evidence" value="ECO:0000315"/>
    <property type="project" value="FlyBase"/>
</dbReference>
<dbReference type="GO" id="GO:0006661">
    <property type="term" value="P:phosphatidylinositol biosynthetic process"/>
    <property type="evidence" value="ECO:0000318"/>
    <property type="project" value="GO_Central"/>
</dbReference>
<dbReference type="InterPro" id="IPR049941">
    <property type="entry name" value="LPLAT_7/PORCN-like"/>
</dbReference>
<dbReference type="InterPro" id="IPR004299">
    <property type="entry name" value="MBOAT_fam"/>
</dbReference>
<dbReference type="PANTHER" id="PTHR13906:SF16">
    <property type="entry name" value="LYSOPHOSPHOLIPID ACYLTRANSFERASE 7"/>
    <property type="match status" value="1"/>
</dbReference>
<dbReference type="PANTHER" id="PTHR13906">
    <property type="entry name" value="PORCUPINE"/>
    <property type="match status" value="1"/>
</dbReference>
<dbReference type="Pfam" id="PF03062">
    <property type="entry name" value="MBOAT"/>
    <property type="match status" value="1"/>
</dbReference>
<comment type="function">
    <text evidence="4">Acyltransferase that mediates the acylation of lysophospholipids to produce phospholipids (glycerophospholipids). Highest activity with lysophosphatidylinositol (1-acyl-sn-glycero-3-phospho-(1D-myo-inositol) or LPI) producing phosphatidylinositol (1,2-diacyl-sn-glycero-3-phospho-(1D-myo-inositol) or PI) (LPIAT activity), but also converts lysophosphatidylcholine (1-acyl-sn-glycero-3-phosphocholine or LPC) to phosphatidylcholine (1,2-diacyl-sn-glycero-3-phosphocholine or PC) (LPCAT activity), lysophosphatidylserine (1-acyl-2-hydroxy-sn-glycero-3-phospho-L-serine or LPS) to phosphatidylserine (1,2-diacyl-sn-glycero-3-phospho-L-serine or PS) (LPSAT activity), and lysophosphatidylethanolamine (1-acyl-sn-glycero-3-phosphoethanolamine or LPE) producing phosphatidylethanolamine (1,2-diacyl-sn-glycero-3-phosphoethanolamine or PE) (LPEAT activity). Has a preference for unsaturated fatty acid arachidonoyl-CoA ((5Z,8Z,11Z,14Z)-eicosatetraenoyl-CoA). Glycerophospholipids are important structural and functional components of cellular membrane, acyl-chain remodeling regulates the molecular species distribution of glycerophospholipids which can affect membrane fluidity and curvature.</text>
</comment>
<comment type="catalytic activity">
    <reaction evidence="4">
        <text>a 1-acyl-sn-glycero-3-phospho-(1D-myo-inositol) + (5Z,8Z,11Z,14Z)-eicosatetraenoyl-CoA = a 1-acyl-2-(5Z,8Z,11Z,14Z-eicosatetraenoyl)-sn-glycero-3-phospho-(1D-myo-inositol) + CoA</text>
        <dbReference type="Rhea" id="RHEA:37015"/>
        <dbReference type="ChEBI" id="CHEBI:57287"/>
        <dbReference type="ChEBI" id="CHEBI:57368"/>
        <dbReference type="ChEBI" id="CHEBI:64771"/>
        <dbReference type="ChEBI" id="CHEBI:75243"/>
    </reaction>
    <physiologicalReaction direction="left-to-right" evidence="4">
        <dbReference type="Rhea" id="RHEA:37016"/>
    </physiologicalReaction>
</comment>
<comment type="catalytic activity">
    <reaction evidence="4">
        <text>a 1-acyl-sn-glycero-3-phosphocholine + an acyl-CoA = a 1,2-diacyl-sn-glycero-3-phosphocholine + CoA</text>
        <dbReference type="Rhea" id="RHEA:12937"/>
        <dbReference type="ChEBI" id="CHEBI:57287"/>
        <dbReference type="ChEBI" id="CHEBI:57643"/>
        <dbReference type="ChEBI" id="CHEBI:58168"/>
        <dbReference type="ChEBI" id="CHEBI:58342"/>
        <dbReference type="EC" id="2.3.1.23"/>
    </reaction>
    <physiologicalReaction direction="left-to-right" evidence="4">
        <dbReference type="Rhea" id="RHEA:12938"/>
    </physiologicalReaction>
</comment>
<comment type="catalytic activity">
    <reaction evidence="4">
        <text>(9Z)-hexadecenoyl-CoA + 1-hexadecanoyl-sn-glycero-3-phosphocholine = 1-hexadecanoyl-2-(9Z-hexadecenoyl)-sn-glycero-3-phosphocholine + CoA</text>
        <dbReference type="Rhea" id="RHEA:37207"/>
        <dbReference type="ChEBI" id="CHEBI:57287"/>
        <dbReference type="ChEBI" id="CHEBI:61540"/>
        <dbReference type="ChEBI" id="CHEBI:72998"/>
        <dbReference type="ChEBI" id="CHEBI:74000"/>
    </reaction>
    <physiologicalReaction direction="left-to-right" evidence="4">
        <dbReference type="Rhea" id="RHEA:37208"/>
    </physiologicalReaction>
</comment>
<comment type="catalytic activity">
    <reaction evidence="4">
        <text>a 1-acyl-sn-glycero-3-phospho-L-serine + an acyl-CoA = a 1,2-diacyl-sn-glycero-3-phospho-L-serine + CoA</text>
        <dbReference type="Rhea" id="RHEA:33191"/>
        <dbReference type="ChEBI" id="CHEBI:57262"/>
        <dbReference type="ChEBI" id="CHEBI:57287"/>
        <dbReference type="ChEBI" id="CHEBI:58342"/>
        <dbReference type="ChEBI" id="CHEBI:64379"/>
        <dbReference type="EC" id="2.3.1.n6"/>
    </reaction>
    <physiologicalReaction direction="left-to-right" evidence="4">
        <dbReference type="Rhea" id="RHEA:33192"/>
    </physiologicalReaction>
</comment>
<comment type="catalytic activity">
    <reaction evidence="4">
        <text>1-(9Z-octadecenoyl)-sn-glycero-3-phospho-L-serine + (9Z)-hexadecenoyl-CoA = 1-(9Z-octadecenoyl)-2-(9Z-hexadecenoyl)-sn-glycero-3-phospho-L-serine + CoA</text>
        <dbReference type="Rhea" id="RHEA:37399"/>
        <dbReference type="ChEBI" id="CHEBI:57287"/>
        <dbReference type="ChEBI" id="CHEBI:61540"/>
        <dbReference type="ChEBI" id="CHEBI:74617"/>
        <dbReference type="ChEBI" id="CHEBI:74901"/>
    </reaction>
    <physiologicalReaction direction="left-to-right" evidence="4">
        <dbReference type="Rhea" id="RHEA:37400"/>
    </physiologicalReaction>
</comment>
<comment type="catalytic activity">
    <reaction evidence="4">
        <text>a 1-acyl-sn-glycero-3-phosphoethanolamine + an acyl-CoA = a 1,2-diacyl-sn-glycero-3-phosphoethanolamine + CoA</text>
        <dbReference type="Rhea" id="RHEA:32995"/>
        <dbReference type="ChEBI" id="CHEBI:57287"/>
        <dbReference type="ChEBI" id="CHEBI:58342"/>
        <dbReference type="ChEBI" id="CHEBI:64381"/>
        <dbReference type="ChEBI" id="CHEBI:64612"/>
        <dbReference type="EC" id="2.3.1.n7"/>
    </reaction>
    <physiologicalReaction direction="left-to-right" evidence="4">
        <dbReference type="Rhea" id="RHEA:32996"/>
    </physiologicalReaction>
</comment>
<comment type="catalytic activity">
    <reaction evidence="4">
        <text>1-hexadecanoyl-sn-glycero-3-phosphoethanolamine + (9Z)-hexadecenoyl-CoA = 1-hexadecanoyl-2-(9Z)-hexadecenoyl-sn-glycero-3-phosphoethanolamine + CoA</text>
        <dbReference type="Rhea" id="RHEA:37419"/>
        <dbReference type="ChEBI" id="CHEBI:57287"/>
        <dbReference type="ChEBI" id="CHEBI:61540"/>
        <dbReference type="ChEBI" id="CHEBI:73004"/>
        <dbReference type="ChEBI" id="CHEBI:73999"/>
    </reaction>
    <physiologicalReaction direction="left-to-right" evidence="4">
        <dbReference type="Rhea" id="RHEA:37420"/>
    </physiologicalReaction>
</comment>
<comment type="pathway">
    <text evidence="4">Lipid metabolism; phospholipid metabolism.</text>
</comment>
<comment type="subcellular location">
    <subcellularLocation>
        <location evidence="4">Membrane</location>
        <topology evidence="6">Multi-pass membrane protein</topology>
    </subcellularLocation>
</comment>
<comment type="similarity">
    <text evidence="6">Belongs to the membrane-bound acyltransferase family.</text>
</comment>
<sequence length="489" mass="56308">MSIDDVIYVICLLGCIGAGSYVKKIADEGQRKLVSTGLGVLVVVIVSGLHSLHCFVSLALGTAAVLLVHPSKGHLVTFAVMFGYLVFFRIFDFYFGIPGHTNMIQMILTLKVSGIAFEKTAAWKRLQAHDEQKKNDQRDVHQESPIEITDYDVELQSLSAAEILHYSFNYIGVLTGPYYRYRTYRDYFEMPFKTYAPTVEATLEKLKYAVFYCALYLATNYMWPLDYALSDEFFNDRSFVYRLLYVWPTFFTFRARIYTGLTLSECVCTMAGFGAYPDESDPNNGEGPRKRYQHLKRDADKHTYNFTTIVNTRVLEVERCWTFREGMKHWNVCVQYWLAVNVYKLFPSKKYRTGATLLCSAYWHGFRPGHYFCIMGAPFYVSLEDMWDKLVRKSATGTSRRVIDVIFWIFKWFAFSYLGEAFLLSSFGNIWRFYSSVYHIGYISWAAMTALGFYLTSQRKAAERRKKRAAEKAAGGDGIAAAIEKEKAQ</sequence>
<feature type="chain" id="PRO_0000453373" description="Membrane-bound acylglycerophosphatidylinositol O-acyltransferase frj">
    <location>
        <begin position="1"/>
        <end position="489"/>
    </location>
</feature>
<feature type="transmembrane region" description="Helical" evidence="3">
    <location>
        <begin position="2"/>
        <end position="22"/>
    </location>
</feature>
<feature type="transmembrane region" description="Helical" evidence="3">
    <location>
        <begin position="40"/>
        <end position="60"/>
    </location>
</feature>
<feature type="transmembrane region" description="Helical" evidence="3">
    <location>
        <begin position="75"/>
        <end position="95"/>
    </location>
</feature>
<feature type="transmembrane region" description="Helical" evidence="3">
    <location>
        <begin position="405"/>
        <end position="425"/>
    </location>
</feature>
<feature type="transmembrane region" description="Helical" evidence="3">
    <location>
        <begin position="433"/>
        <end position="453"/>
    </location>
</feature>
<feature type="active site" evidence="1">
    <location>
        <position position="331"/>
    </location>
</feature>
<feature type="active site" evidence="1">
    <location>
        <position position="364"/>
    </location>
</feature>
<reference key="1">
    <citation type="journal article" date="2000" name="Science">
        <title>The genome sequence of Drosophila melanogaster.</title>
        <authorList>
            <person name="Adams M.D."/>
            <person name="Celniker S.E."/>
            <person name="Holt R.A."/>
            <person name="Evans C.A."/>
            <person name="Gocayne J.D."/>
            <person name="Amanatides P.G."/>
            <person name="Scherer S.E."/>
            <person name="Li P.W."/>
            <person name="Hoskins R.A."/>
            <person name="Galle R.F."/>
            <person name="George R.A."/>
            <person name="Lewis S.E."/>
            <person name="Richards S."/>
            <person name="Ashburner M."/>
            <person name="Henderson S.N."/>
            <person name="Sutton G.G."/>
            <person name="Wortman J.R."/>
            <person name="Yandell M.D."/>
            <person name="Zhang Q."/>
            <person name="Chen L.X."/>
            <person name="Brandon R.C."/>
            <person name="Rogers Y.-H.C."/>
            <person name="Blazej R.G."/>
            <person name="Champe M."/>
            <person name="Pfeiffer B.D."/>
            <person name="Wan K.H."/>
            <person name="Doyle C."/>
            <person name="Baxter E.G."/>
            <person name="Helt G."/>
            <person name="Nelson C.R."/>
            <person name="Miklos G.L.G."/>
            <person name="Abril J.F."/>
            <person name="Agbayani A."/>
            <person name="An H.-J."/>
            <person name="Andrews-Pfannkoch C."/>
            <person name="Baldwin D."/>
            <person name="Ballew R.M."/>
            <person name="Basu A."/>
            <person name="Baxendale J."/>
            <person name="Bayraktaroglu L."/>
            <person name="Beasley E.M."/>
            <person name="Beeson K.Y."/>
            <person name="Benos P.V."/>
            <person name="Berman B.P."/>
            <person name="Bhandari D."/>
            <person name="Bolshakov S."/>
            <person name="Borkova D."/>
            <person name="Botchan M.R."/>
            <person name="Bouck J."/>
            <person name="Brokstein P."/>
            <person name="Brottier P."/>
            <person name="Burtis K.C."/>
            <person name="Busam D.A."/>
            <person name="Butler H."/>
            <person name="Cadieu E."/>
            <person name="Center A."/>
            <person name="Chandra I."/>
            <person name="Cherry J.M."/>
            <person name="Cawley S."/>
            <person name="Dahlke C."/>
            <person name="Davenport L.B."/>
            <person name="Davies P."/>
            <person name="de Pablos B."/>
            <person name="Delcher A."/>
            <person name="Deng Z."/>
            <person name="Mays A.D."/>
            <person name="Dew I."/>
            <person name="Dietz S.M."/>
            <person name="Dodson K."/>
            <person name="Doup L.E."/>
            <person name="Downes M."/>
            <person name="Dugan-Rocha S."/>
            <person name="Dunkov B.C."/>
            <person name="Dunn P."/>
            <person name="Durbin K.J."/>
            <person name="Evangelista C.C."/>
            <person name="Ferraz C."/>
            <person name="Ferriera S."/>
            <person name="Fleischmann W."/>
            <person name="Fosler C."/>
            <person name="Gabrielian A.E."/>
            <person name="Garg N.S."/>
            <person name="Gelbart W.M."/>
            <person name="Glasser K."/>
            <person name="Glodek A."/>
            <person name="Gong F."/>
            <person name="Gorrell J.H."/>
            <person name="Gu Z."/>
            <person name="Guan P."/>
            <person name="Harris M."/>
            <person name="Harris N.L."/>
            <person name="Harvey D.A."/>
            <person name="Heiman T.J."/>
            <person name="Hernandez J.R."/>
            <person name="Houck J."/>
            <person name="Hostin D."/>
            <person name="Houston K.A."/>
            <person name="Howland T.J."/>
            <person name="Wei M.-H."/>
            <person name="Ibegwam C."/>
            <person name="Jalali M."/>
            <person name="Kalush F."/>
            <person name="Karpen G.H."/>
            <person name="Ke Z."/>
            <person name="Kennison J.A."/>
            <person name="Ketchum K.A."/>
            <person name="Kimmel B.E."/>
            <person name="Kodira C.D."/>
            <person name="Kraft C.L."/>
            <person name="Kravitz S."/>
            <person name="Kulp D."/>
            <person name="Lai Z."/>
            <person name="Lasko P."/>
            <person name="Lei Y."/>
            <person name="Levitsky A.A."/>
            <person name="Li J.H."/>
            <person name="Li Z."/>
            <person name="Liang Y."/>
            <person name="Lin X."/>
            <person name="Liu X."/>
            <person name="Mattei B."/>
            <person name="McIntosh T.C."/>
            <person name="McLeod M.P."/>
            <person name="McPherson D."/>
            <person name="Merkulov G."/>
            <person name="Milshina N.V."/>
            <person name="Mobarry C."/>
            <person name="Morris J."/>
            <person name="Moshrefi A."/>
            <person name="Mount S.M."/>
            <person name="Moy M."/>
            <person name="Murphy B."/>
            <person name="Murphy L."/>
            <person name="Muzny D.M."/>
            <person name="Nelson D.L."/>
            <person name="Nelson D.R."/>
            <person name="Nelson K.A."/>
            <person name="Nixon K."/>
            <person name="Nusskern D.R."/>
            <person name="Pacleb J.M."/>
            <person name="Palazzolo M."/>
            <person name="Pittman G.S."/>
            <person name="Pan S."/>
            <person name="Pollard J."/>
            <person name="Puri V."/>
            <person name="Reese M.G."/>
            <person name="Reinert K."/>
            <person name="Remington K."/>
            <person name="Saunders R.D.C."/>
            <person name="Scheeler F."/>
            <person name="Shen H."/>
            <person name="Shue B.C."/>
            <person name="Siden-Kiamos I."/>
            <person name="Simpson M."/>
            <person name="Skupski M.P."/>
            <person name="Smith T.J."/>
            <person name="Spier E."/>
            <person name="Spradling A.C."/>
            <person name="Stapleton M."/>
            <person name="Strong R."/>
            <person name="Sun E."/>
            <person name="Svirskas R."/>
            <person name="Tector C."/>
            <person name="Turner R."/>
            <person name="Venter E."/>
            <person name="Wang A.H."/>
            <person name="Wang X."/>
            <person name="Wang Z.-Y."/>
            <person name="Wassarman D.A."/>
            <person name="Weinstock G.M."/>
            <person name="Weissenbach J."/>
            <person name="Williams S.M."/>
            <person name="Woodage T."/>
            <person name="Worley K.C."/>
            <person name="Wu D."/>
            <person name="Yang S."/>
            <person name="Yao Q.A."/>
            <person name="Ye J."/>
            <person name="Yeh R.-F."/>
            <person name="Zaveri J.S."/>
            <person name="Zhan M."/>
            <person name="Zhang G."/>
            <person name="Zhao Q."/>
            <person name="Zheng L."/>
            <person name="Zheng X.H."/>
            <person name="Zhong F.N."/>
            <person name="Zhong W."/>
            <person name="Zhou X."/>
            <person name="Zhu S.C."/>
            <person name="Zhu X."/>
            <person name="Smith H.O."/>
            <person name="Gibbs R.A."/>
            <person name="Myers E.W."/>
            <person name="Rubin G.M."/>
            <person name="Venter J.C."/>
        </authorList>
    </citation>
    <scope>NUCLEOTIDE SEQUENCE [LARGE SCALE GENOMIC DNA]</scope>
    <source>
        <strain>Berkeley</strain>
    </source>
</reference>
<reference key="2">
    <citation type="journal article" date="2002" name="Genome Biol.">
        <title>Annotation of the Drosophila melanogaster euchromatic genome: a systematic review.</title>
        <authorList>
            <person name="Misra S."/>
            <person name="Crosby M.A."/>
            <person name="Mungall C.J."/>
            <person name="Matthews B.B."/>
            <person name="Campbell K.S."/>
            <person name="Hradecky P."/>
            <person name="Huang Y."/>
            <person name="Kaminker J.S."/>
            <person name="Millburn G.H."/>
            <person name="Prochnik S.E."/>
            <person name="Smith C.D."/>
            <person name="Tupy J.L."/>
            <person name="Whitfield E.J."/>
            <person name="Bayraktaroglu L."/>
            <person name="Berman B.P."/>
            <person name="Bettencourt B.R."/>
            <person name="Celniker S.E."/>
            <person name="de Grey A.D.N.J."/>
            <person name="Drysdale R.A."/>
            <person name="Harris N.L."/>
            <person name="Richter J."/>
            <person name="Russo S."/>
            <person name="Schroeder A.J."/>
            <person name="Shu S.Q."/>
            <person name="Stapleton M."/>
            <person name="Yamada C."/>
            <person name="Ashburner M."/>
            <person name="Gelbart W.M."/>
            <person name="Rubin G.M."/>
            <person name="Lewis S.E."/>
        </authorList>
    </citation>
    <scope>GENOME REANNOTATION</scope>
    <source>
        <strain>Berkeley</strain>
    </source>
</reference>
<reference evidence="8" key="3">
    <citation type="submission" date="2003-01" db="EMBL/GenBank/DDBJ databases">
        <authorList>
            <person name="Stapleton M."/>
            <person name="Brokstein P."/>
            <person name="Hong L."/>
            <person name="Agbayani A."/>
            <person name="Carlson J."/>
            <person name="Champe M."/>
            <person name="Chavez C."/>
            <person name="Dorsett V."/>
            <person name="Dresnek D."/>
            <person name="Farfan D."/>
            <person name="Frise E."/>
            <person name="George R."/>
            <person name="Gonzalez M."/>
            <person name="Guarin H."/>
            <person name="Kronmiller B."/>
            <person name="Li P."/>
            <person name="Liao G."/>
            <person name="Miranda A."/>
            <person name="Mungall C.J."/>
            <person name="Nunoo J."/>
            <person name="Pacleb J."/>
            <person name="Paragas V."/>
            <person name="Park S."/>
            <person name="Patel S."/>
            <person name="Phouanenavong S."/>
            <person name="Wan K."/>
            <person name="Yu C."/>
            <person name="Lewis S.E."/>
            <person name="Rubin G.M."/>
            <person name="Celniker S."/>
        </authorList>
    </citation>
    <scope>NUCLEOTIDE SEQUENCE [LARGE SCALE MRNA]</scope>
    <source>
        <strain evidence="8">Berkeley</strain>
    </source>
</reference>
<reference key="4">
    <citation type="journal article" date="2009" name="Mol. Biol. Cell">
        <title>Drosophila lysophospholipid acyltransferases are specifically required for germ cell development.</title>
        <authorList>
            <person name="Steinhauer J."/>
            <person name="Gijon M.A."/>
            <person name="Riekhof W.R."/>
            <person name="Voelker D.R."/>
            <person name="Murphy R.C."/>
            <person name="Treisman J.E."/>
        </authorList>
    </citation>
    <scope>FUNCTION</scope>
    <scope>CATALYTIC ACTIVITY</scope>
    <scope>PATHWAY</scope>
    <scope>SUBCELLULAR LOCATION</scope>
</reference>
<accession>Q9VMD5</accession>
<keyword id="KW-0012">Acyltransferase</keyword>
<keyword id="KW-0472">Membrane</keyword>
<keyword id="KW-1185">Reference proteome</keyword>
<keyword id="KW-0808">Transferase</keyword>
<keyword id="KW-0812">Transmembrane</keyword>
<keyword id="KW-1133">Transmembrane helix</keyword>
<gene>
    <name evidence="5 7 9" type="primary">frj</name>
    <name evidence="7 9" type="ORF">CG9526</name>
</gene>
<evidence type="ECO:0000250" key="1">
    <source>
        <dbReference type="UniProtKB" id="P0C7A3"/>
    </source>
</evidence>
<evidence type="ECO:0000250" key="2">
    <source>
        <dbReference type="UniProtKB" id="Q96N66"/>
    </source>
</evidence>
<evidence type="ECO:0000255" key="3"/>
<evidence type="ECO:0000269" key="4">
    <source>
    </source>
</evidence>
<evidence type="ECO:0000303" key="5">
    <source>
    </source>
</evidence>
<evidence type="ECO:0000305" key="6"/>
<evidence type="ECO:0000312" key="7">
    <source>
        <dbReference type="EMBL" id="AAF52384.1"/>
    </source>
</evidence>
<evidence type="ECO:0000312" key="8">
    <source>
        <dbReference type="EMBL" id="AAO25028.1"/>
    </source>
</evidence>
<evidence type="ECO:0000312" key="9">
    <source>
        <dbReference type="FlyBase" id="FBgn0031815"/>
    </source>
</evidence>
<proteinExistence type="evidence at protein level"/>